<comment type="function">
    <text>Potential regulator protein for the acrEF/envCD genes.</text>
</comment>
<name>ENVR_ECOLI</name>
<feature type="chain" id="PRO_0000070593" description="Probable acrEF/envCD operon repressor">
    <location>
        <begin position="1"/>
        <end position="220"/>
    </location>
</feature>
<feature type="domain" description="HTH tetR-type" evidence="1">
    <location>
        <begin position="10"/>
        <end position="70"/>
    </location>
</feature>
<feature type="DNA-binding region" description="H-T-H motif" evidence="1">
    <location>
        <begin position="33"/>
        <end position="52"/>
    </location>
</feature>
<keyword id="KW-0238">DNA-binding</keyword>
<keyword id="KW-1185">Reference proteome</keyword>
<keyword id="KW-0678">Repressor</keyword>
<keyword id="KW-0804">Transcription</keyword>
<keyword id="KW-0805">Transcription regulation</keyword>
<proteinExistence type="predicted"/>
<protein>
    <recommendedName>
        <fullName>Probable acrEF/envCD operon repressor</fullName>
    </recommendedName>
</protein>
<dbReference type="EMBL" id="X57948">
    <property type="protein sequence ID" value="CAA41015.1"/>
    <property type="molecule type" value="Genomic_DNA"/>
</dbReference>
<dbReference type="EMBL" id="U18997">
    <property type="protein sequence ID" value="AAA58068.1"/>
    <property type="molecule type" value="Genomic_DNA"/>
</dbReference>
<dbReference type="EMBL" id="U00096">
    <property type="protein sequence ID" value="AAC76296.1"/>
    <property type="molecule type" value="Genomic_DNA"/>
</dbReference>
<dbReference type="EMBL" id="AP009048">
    <property type="protein sequence ID" value="BAE77305.1"/>
    <property type="molecule type" value="Genomic_DNA"/>
</dbReference>
<dbReference type="PIR" id="B65119">
    <property type="entry name" value="B65119"/>
</dbReference>
<dbReference type="RefSeq" id="NP_417730.1">
    <property type="nucleotide sequence ID" value="NC_000913.3"/>
</dbReference>
<dbReference type="SMR" id="P0ACT2"/>
<dbReference type="BioGRID" id="4261952">
    <property type="interactions" value="59"/>
</dbReference>
<dbReference type="BioGRID" id="852017">
    <property type="interactions" value="5"/>
</dbReference>
<dbReference type="FunCoup" id="P0ACT2">
    <property type="interactions" value="65"/>
</dbReference>
<dbReference type="IntAct" id="P0ACT2">
    <property type="interactions" value="7"/>
</dbReference>
<dbReference type="STRING" id="511145.b3264"/>
<dbReference type="CARD" id="ARO:3000656">
    <property type="molecule name" value="AcrS"/>
    <property type="mechanism identifier" value="ARO:0010000"/>
    <property type="mechanism name" value="antibiotic efflux"/>
</dbReference>
<dbReference type="PaxDb" id="511145-b3264"/>
<dbReference type="EnsemblBacteria" id="AAC76296">
    <property type="protein sequence ID" value="AAC76296"/>
    <property type="gene ID" value="b3264"/>
</dbReference>
<dbReference type="GeneID" id="947704"/>
<dbReference type="KEGG" id="ecj:JW3232"/>
<dbReference type="KEGG" id="eco:b3264"/>
<dbReference type="KEGG" id="ecoc:C3026_17755"/>
<dbReference type="PATRIC" id="fig|1411691.4.peg.3464"/>
<dbReference type="EchoBASE" id="EB1692"/>
<dbReference type="eggNOG" id="COG1309">
    <property type="taxonomic scope" value="Bacteria"/>
</dbReference>
<dbReference type="HOGENOM" id="CLU_069356_12_3_6"/>
<dbReference type="InParanoid" id="P0ACT2"/>
<dbReference type="OMA" id="QQGCIAN"/>
<dbReference type="OrthoDB" id="5816932at2"/>
<dbReference type="PhylomeDB" id="P0ACT2"/>
<dbReference type="BioCyc" id="EcoCyc:EG11741-MONOMER"/>
<dbReference type="PRO" id="PR:P0ACT2"/>
<dbReference type="Proteomes" id="UP000000625">
    <property type="component" value="Chromosome"/>
</dbReference>
<dbReference type="GO" id="GO:0032993">
    <property type="term" value="C:protein-DNA complex"/>
    <property type="evidence" value="ECO:0000318"/>
    <property type="project" value="GO_Central"/>
</dbReference>
<dbReference type="GO" id="GO:0003677">
    <property type="term" value="F:DNA binding"/>
    <property type="evidence" value="ECO:0007669"/>
    <property type="project" value="UniProtKB-KW"/>
</dbReference>
<dbReference type="GO" id="GO:0003700">
    <property type="term" value="F:DNA-binding transcription factor activity"/>
    <property type="evidence" value="ECO:0000315"/>
    <property type="project" value="EcoCyc"/>
</dbReference>
<dbReference type="GO" id="GO:0045892">
    <property type="term" value="P:negative regulation of DNA-templated transcription"/>
    <property type="evidence" value="ECO:0000315"/>
    <property type="project" value="EcoCyc"/>
</dbReference>
<dbReference type="GO" id="GO:0009410">
    <property type="term" value="P:response to xenobiotic stimulus"/>
    <property type="evidence" value="ECO:0000315"/>
    <property type="project" value="EcoCyc"/>
</dbReference>
<dbReference type="FunFam" id="1.10.357.10:FF:000003">
    <property type="entry name" value="HTH-type transcriptional regulator AcrR"/>
    <property type="match status" value="1"/>
</dbReference>
<dbReference type="Gene3D" id="1.10.357.10">
    <property type="entry name" value="Tetracycline Repressor, domain 2"/>
    <property type="match status" value="1"/>
</dbReference>
<dbReference type="InterPro" id="IPR023772">
    <property type="entry name" value="DNA-bd_HTH_TetR-type_CS"/>
</dbReference>
<dbReference type="InterPro" id="IPR009057">
    <property type="entry name" value="Homeodomain-like_sf"/>
</dbReference>
<dbReference type="InterPro" id="IPR050624">
    <property type="entry name" value="HTH-type_Tx_Regulator"/>
</dbReference>
<dbReference type="InterPro" id="IPR001647">
    <property type="entry name" value="HTH_TetR"/>
</dbReference>
<dbReference type="InterPro" id="IPR036271">
    <property type="entry name" value="Tet_transcr_reg_TetR-rel_C_sf"/>
</dbReference>
<dbReference type="InterPro" id="IPR013572">
    <property type="entry name" value="Tscrpt_reg_MAATS_C"/>
</dbReference>
<dbReference type="NCBIfam" id="NF007430">
    <property type="entry name" value="PRK09975.1"/>
    <property type="match status" value="1"/>
</dbReference>
<dbReference type="PANTHER" id="PTHR43479">
    <property type="entry name" value="ACREF/ENVCD OPERON REPRESSOR-RELATED"/>
    <property type="match status" value="1"/>
</dbReference>
<dbReference type="PANTHER" id="PTHR43479:SF11">
    <property type="entry name" value="ACREF_ENVCD OPERON REPRESSOR-RELATED"/>
    <property type="match status" value="1"/>
</dbReference>
<dbReference type="Pfam" id="PF08361">
    <property type="entry name" value="TetR_C_2"/>
    <property type="match status" value="1"/>
</dbReference>
<dbReference type="Pfam" id="PF00440">
    <property type="entry name" value="TetR_N"/>
    <property type="match status" value="1"/>
</dbReference>
<dbReference type="PRINTS" id="PR00455">
    <property type="entry name" value="HTHTETR"/>
</dbReference>
<dbReference type="SUPFAM" id="SSF46689">
    <property type="entry name" value="Homeodomain-like"/>
    <property type="match status" value="1"/>
</dbReference>
<dbReference type="SUPFAM" id="SSF48498">
    <property type="entry name" value="Tetracyclin repressor-like, C-terminal domain"/>
    <property type="match status" value="1"/>
</dbReference>
<dbReference type="PROSITE" id="PS01081">
    <property type="entry name" value="HTH_TETR_1"/>
    <property type="match status" value="1"/>
</dbReference>
<dbReference type="PROSITE" id="PS50977">
    <property type="entry name" value="HTH_TETR_2"/>
    <property type="match status" value="1"/>
</dbReference>
<sequence>MAKRTKAEALKTRQELIETAIAQFAQHGVSKTTLNDIADAANVTRGAIYWHFENKTQLFNEMWLQQPSLRELIQEHLTAGLEHDPFQQLREKLIVGLQYIAKIPRQQALLKILYHKCEFNDEMLAEGVIREKMGFNPQTLREVLQACQQQGCVANNLDLDVVMIIIDGAFSGIVQNWLMNMAGYDLYKQAPALVDNVLRMFMPDENITKLIHQTNELSVM</sequence>
<organism>
    <name type="scientific">Escherichia coli (strain K12)</name>
    <dbReference type="NCBI Taxonomy" id="83333"/>
    <lineage>
        <taxon>Bacteria</taxon>
        <taxon>Pseudomonadati</taxon>
        <taxon>Pseudomonadota</taxon>
        <taxon>Gammaproteobacteria</taxon>
        <taxon>Enterobacterales</taxon>
        <taxon>Enterobacteriaceae</taxon>
        <taxon>Escherichia</taxon>
    </lineage>
</organism>
<evidence type="ECO:0000255" key="1">
    <source>
        <dbReference type="PROSITE-ProRule" id="PRU00335"/>
    </source>
</evidence>
<accession>P0ACT2</accession>
<accession>P31676</accession>
<accession>Q2M8V1</accession>
<gene>
    <name type="primary">envR</name>
    <name type="synonym">yhdK</name>
    <name type="ordered locus">b3264</name>
    <name type="ordered locus">JW3232</name>
</gene>
<reference key="1">
    <citation type="journal article" date="1991" name="Mol. Gen. Genet.">
        <title>Molecular analysis and nucleotide sequence of the envCD operon of Escherichia coli.</title>
        <authorList>
            <person name="Klein J.R."/>
            <person name="Henrich B."/>
            <person name="Plapp R."/>
        </authorList>
    </citation>
    <scope>NUCLEOTIDE SEQUENCE [GENOMIC DNA]</scope>
    <source>
        <strain>K12</strain>
    </source>
</reference>
<reference key="2">
    <citation type="journal article" date="1997" name="Science">
        <title>The complete genome sequence of Escherichia coli K-12.</title>
        <authorList>
            <person name="Blattner F.R."/>
            <person name="Plunkett G. III"/>
            <person name="Bloch C.A."/>
            <person name="Perna N.T."/>
            <person name="Burland V."/>
            <person name="Riley M."/>
            <person name="Collado-Vides J."/>
            <person name="Glasner J.D."/>
            <person name="Rode C.K."/>
            <person name="Mayhew G.F."/>
            <person name="Gregor J."/>
            <person name="Davis N.W."/>
            <person name="Kirkpatrick H.A."/>
            <person name="Goeden M.A."/>
            <person name="Rose D.J."/>
            <person name="Mau B."/>
            <person name="Shao Y."/>
        </authorList>
    </citation>
    <scope>NUCLEOTIDE SEQUENCE [LARGE SCALE GENOMIC DNA]</scope>
    <source>
        <strain>K12 / MG1655 / ATCC 47076</strain>
    </source>
</reference>
<reference key="3">
    <citation type="journal article" date="2006" name="Mol. Syst. Biol.">
        <title>Highly accurate genome sequences of Escherichia coli K-12 strains MG1655 and W3110.</title>
        <authorList>
            <person name="Hayashi K."/>
            <person name="Morooka N."/>
            <person name="Yamamoto Y."/>
            <person name="Fujita K."/>
            <person name="Isono K."/>
            <person name="Choi S."/>
            <person name="Ohtsubo E."/>
            <person name="Baba T."/>
            <person name="Wanner B.L."/>
            <person name="Mori H."/>
            <person name="Horiuchi T."/>
        </authorList>
    </citation>
    <scope>NUCLEOTIDE SEQUENCE [LARGE SCALE GENOMIC DNA]</scope>
    <source>
        <strain>K12 / W3110 / ATCC 27325 / DSM 5911</strain>
    </source>
</reference>
<reference key="4">
    <citation type="submission" date="1994-07" db="EMBL/GenBank/DDBJ databases">
        <authorList>
            <person name="Klein J.R."/>
        </authorList>
    </citation>
    <scope>GENE NAME</scope>
</reference>